<sequence length="361" mass="39151">MAGNTIGQLFRVTTFGESHGLALGCIVDGVPPGIPLTEADLQHDLDRRRPGTSRYTTQRREPDQVKILSGVFEGVTTGTSIGLLIENTDQRSQDYSAIKDVFRPGHADYTYEQKYGLRDYRGGGRSSARETAMRVAAGAIAKKYLAEKFGIEIRGCLTQMGDIPLEIKDWSQVEQNPFFCPDPDKIDALDELMRALKKEGDSIGAKVTVVASGVPAGLGEPVFDRLDADIAHALMSINAVKGVEIGDGFDVVALRGSQNRDEITKDGFQSNHAGGILGGISSGQQIIAHMALKPTSSITVPGRTINRFGEEVEMITKGRHDPCVGIRAVPIAEAMLAIVLMDHLLRQRAQNADVKTDIPRW</sequence>
<organism>
    <name type="scientific">Escherichia coli O6:K15:H31 (strain 536 / UPEC)</name>
    <dbReference type="NCBI Taxonomy" id="362663"/>
    <lineage>
        <taxon>Bacteria</taxon>
        <taxon>Pseudomonadati</taxon>
        <taxon>Pseudomonadota</taxon>
        <taxon>Gammaproteobacteria</taxon>
        <taxon>Enterobacterales</taxon>
        <taxon>Enterobacteriaceae</taxon>
        <taxon>Escherichia</taxon>
    </lineage>
</organism>
<comment type="function">
    <text evidence="1">Catalyzes the anti-1,4-elimination of the C-3 phosphate and the C-6 proR hydrogen from 5-enolpyruvylshikimate-3-phosphate (EPSP) to yield chorismate, which is the branch point compound that serves as the starting substrate for the three terminal pathways of aromatic amino acid biosynthesis. This reaction introduces a second double bond into the aromatic ring system.</text>
</comment>
<comment type="catalytic activity">
    <reaction evidence="1">
        <text>5-O-(1-carboxyvinyl)-3-phosphoshikimate = chorismate + phosphate</text>
        <dbReference type="Rhea" id="RHEA:21020"/>
        <dbReference type="ChEBI" id="CHEBI:29748"/>
        <dbReference type="ChEBI" id="CHEBI:43474"/>
        <dbReference type="ChEBI" id="CHEBI:57701"/>
        <dbReference type="EC" id="4.2.3.5"/>
    </reaction>
</comment>
<comment type="cofactor">
    <cofactor evidence="1">
        <name>FMNH2</name>
        <dbReference type="ChEBI" id="CHEBI:57618"/>
    </cofactor>
    <text evidence="1">Reduced FMN (FMNH(2)).</text>
</comment>
<comment type="pathway">
    <text evidence="1">Metabolic intermediate biosynthesis; chorismate biosynthesis; chorismate from D-erythrose 4-phosphate and phosphoenolpyruvate: step 7/7.</text>
</comment>
<comment type="subunit">
    <text evidence="1">Homotetramer.</text>
</comment>
<comment type="similarity">
    <text evidence="1">Belongs to the chorismate synthase family.</text>
</comment>
<protein>
    <recommendedName>
        <fullName evidence="1">Chorismate synthase</fullName>
        <shortName evidence="1">CS</shortName>
        <ecNumber evidence="1">4.2.3.5</ecNumber>
    </recommendedName>
    <alternativeName>
        <fullName evidence="1">5-enolpyruvylshikimate-3-phosphate phospholyase</fullName>
    </alternativeName>
</protein>
<name>AROC_ECOL5</name>
<accession>Q0TFB7</accession>
<gene>
    <name evidence="1" type="primary">aroC</name>
    <name type="ordered locus">ECP_2368</name>
</gene>
<feature type="chain" id="PRO_0000256291" description="Chorismate synthase">
    <location>
        <begin position="1"/>
        <end position="361"/>
    </location>
</feature>
<feature type="binding site" evidence="1">
    <location>
        <position position="48"/>
    </location>
    <ligand>
        <name>NADP(+)</name>
        <dbReference type="ChEBI" id="CHEBI:58349"/>
    </ligand>
</feature>
<feature type="binding site" evidence="1">
    <location>
        <position position="54"/>
    </location>
    <ligand>
        <name>NADP(+)</name>
        <dbReference type="ChEBI" id="CHEBI:58349"/>
    </ligand>
</feature>
<feature type="binding site" evidence="1">
    <location>
        <begin position="125"/>
        <end position="127"/>
    </location>
    <ligand>
        <name>FMN</name>
        <dbReference type="ChEBI" id="CHEBI:58210"/>
    </ligand>
</feature>
<feature type="binding site" evidence="1">
    <location>
        <begin position="238"/>
        <end position="239"/>
    </location>
    <ligand>
        <name>FMN</name>
        <dbReference type="ChEBI" id="CHEBI:58210"/>
    </ligand>
</feature>
<feature type="binding site" evidence="1">
    <location>
        <position position="278"/>
    </location>
    <ligand>
        <name>FMN</name>
        <dbReference type="ChEBI" id="CHEBI:58210"/>
    </ligand>
</feature>
<feature type="binding site" evidence="1">
    <location>
        <begin position="293"/>
        <end position="297"/>
    </location>
    <ligand>
        <name>FMN</name>
        <dbReference type="ChEBI" id="CHEBI:58210"/>
    </ligand>
</feature>
<feature type="binding site" evidence="1">
    <location>
        <position position="319"/>
    </location>
    <ligand>
        <name>FMN</name>
        <dbReference type="ChEBI" id="CHEBI:58210"/>
    </ligand>
</feature>
<evidence type="ECO:0000255" key="1">
    <source>
        <dbReference type="HAMAP-Rule" id="MF_00300"/>
    </source>
</evidence>
<keyword id="KW-0028">Amino-acid biosynthesis</keyword>
<keyword id="KW-0057">Aromatic amino acid biosynthesis</keyword>
<keyword id="KW-0274">FAD</keyword>
<keyword id="KW-0285">Flavoprotein</keyword>
<keyword id="KW-0288">FMN</keyword>
<keyword id="KW-0456">Lyase</keyword>
<keyword id="KW-0521">NADP</keyword>
<proteinExistence type="inferred from homology"/>
<reference key="1">
    <citation type="journal article" date="2006" name="Mol. Microbiol.">
        <title>Role of pathogenicity island-associated integrases in the genome plasticity of uropathogenic Escherichia coli strain 536.</title>
        <authorList>
            <person name="Hochhut B."/>
            <person name="Wilde C."/>
            <person name="Balling G."/>
            <person name="Middendorf B."/>
            <person name="Dobrindt U."/>
            <person name="Brzuszkiewicz E."/>
            <person name="Gottschalk G."/>
            <person name="Carniel E."/>
            <person name="Hacker J."/>
        </authorList>
    </citation>
    <scope>NUCLEOTIDE SEQUENCE [LARGE SCALE GENOMIC DNA]</scope>
    <source>
        <strain>536 / UPEC</strain>
    </source>
</reference>
<dbReference type="EC" id="4.2.3.5" evidence="1"/>
<dbReference type="EMBL" id="CP000247">
    <property type="protein sequence ID" value="ABG70362.1"/>
    <property type="molecule type" value="Genomic_DNA"/>
</dbReference>
<dbReference type="RefSeq" id="WP_001297933.1">
    <property type="nucleotide sequence ID" value="NC_008253.1"/>
</dbReference>
<dbReference type="SMR" id="Q0TFB7"/>
<dbReference type="KEGG" id="ecp:ECP_2368"/>
<dbReference type="HOGENOM" id="CLU_034547_0_2_6"/>
<dbReference type="UniPathway" id="UPA00053">
    <property type="reaction ID" value="UER00090"/>
</dbReference>
<dbReference type="Proteomes" id="UP000009182">
    <property type="component" value="Chromosome"/>
</dbReference>
<dbReference type="GO" id="GO:0005829">
    <property type="term" value="C:cytosol"/>
    <property type="evidence" value="ECO:0007669"/>
    <property type="project" value="TreeGrafter"/>
</dbReference>
<dbReference type="GO" id="GO:0004107">
    <property type="term" value="F:chorismate synthase activity"/>
    <property type="evidence" value="ECO:0007669"/>
    <property type="project" value="UniProtKB-UniRule"/>
</dbReference>
<dbReference type="GO" id="GO:0010181">
    <property type="term" value="F:FMN binding"/>
    <property type="evidence" value="ECO:0007669"/>
    <property type="project" value="TreeGrafter"/>
</dbReference>
<dbReference type="GO" id="GO:0008652">
    <property type="term" value="P:amino acid biosynthetic process"/>
    <property type="evidence" value="ECO:0007669"/>
    <property type="project" value="UniProtKB-KW"/>
</dbReference>
<dbReference type="GO" id="GO:0009073">
    <property type="term" value="P:aromatic amino acid family biosynthetic process"/>
    <property type="evidence" value="ECO:0007669"/>
    <property type="project" value="UniProtKB-KW"/>
</dbReference>
<dbReference type="GO" id="GO:0009423">
    <property type="term" value="P:chorismate biosynthetic process"/>
    <property type="evidence" value="ECO:0007669"/>
    <property type="project" value="UniProtKB-UniRule"/>
</dbReference>
<dbReference type="CDD" id="cd07304">
    <property type="entry name" value="Chorismate_synthase"/>
    <property type="match status" value="1"/>
</dbReference>
<dbReference type="FunFam" id="3.60.150.10:FF:000001">
    <property type="entry name" value="Chorismate synthase"/>
    <property type="match status" value="1"/>
</dbReference>
<dbReference type="Gene3D" id="3.60.150.10">
    <property type="entry name" value="Chorismate synthase AroC"/>
    <property type="match status" value="1"/>
</dbReference>
<dbReference type="HAMAP" id="MF_00300">
    <property type="entry name" value="Chorismate_synth"/>
    <property type="match status" value="1"/>
</dbReference>
<dbReference type="InterPro" id="IPR000453">
    <property type="entry name" value="Chorismate_synth"/>
</dbReference>
<dbReference type="InterPro" id="IPR035904">
    <property type="entry name" value="Chorismate_synth_AroC_sf"/>
</dbReference>
<dbReference type="InterPro" id="IPR020541">
    <property type="entry name" value="Chorismate_synthase_CS"/>
</dbReference>
<dbReference type="NCBIfam" id="TIGR00033">
    <property type="entry name" value="aroC"/>
    <property type="match status" value="1"/>
</dbReference>
<dbReference type="NCBIfam" id="NF003793">
    <property type="entry name" value="PRK05382.1"/>
    <property type="match status" value="1"/>
</dbReference>
<dbReference type="PANTHER" id="PTHR21085">
    <property type="entry name" value="CHORISMATE SYNTHASE"/>
    <property type="match status" value="1"/>
</dbReference>
<dbReference type="PANTHER" id="PTHR21085:SF0">
    <property type="entry name" value="CHORISMATE SYNTHASE"/>
    <property type="match status" value="1"/>
</dbReference>
<dbReference type="Pfam" id="PF01264">
    <property type="entry name" value="Chorismate_synt"/>
    <property type="match status" value="1"/>
</dbReference>
<dbReference type="PIRSF" id="PIRSF001456">
    <property type="entry name" value="Chorismate_synth"/>
    <property type="match status" value="1"/>
</dbReference>
<dbReference type="SUPFAM" id="SSF103263">
    <property type="entry name" value="Chorismate synthase, AroC"/>
    <property type="match status" value="1"/>
</dbReference>
<dbReference type="PROSITE" id="PS00787">
    <property type="entry name" value="CHORISMATE_SYNTHASE_1"/>
    <property type="match status" value="1"/>
</dbReference>
<dbReference type="PROSITE" id="PS00788">
    <property type="entry name" value="CHORISMATE_SYNTHASE_2"/>
    <property type="match status" value="1"/>
</dbReference>
<dbReference type="PROSITE" id="PS00789">
    <property type="entry name" value="CHORISMATE_SYNTHASE_3"/>
    <property type="match status" value="1"/>
</dbReference>